<feature type="chain" id="PRO_0000192141" description="Bifunctional purine biosynthesis protein PurH">
    <location>
        <begin position="1"/>
        <end position="511"/>
    </location>
</feature>
<feature type="domain" description="MGS-like" evidence="2">
    <location>
        <begin position="1"/>
        <end position="146"/>
    </location>
</feature>
<protein>
    <recommendedName>
        <fullName evidence="1">Bifunctional purine biosynthesis protein PurH</fullName>
    </recommendedName>
    <domain>
        <recommendedName>
            <fullName evidence="1">Phosphoribosylaminoimidazolecarboxamide formyltransferase</fullName>
            <ecNumber evidence="1">2.1.2.3</ecNumber>
        </recommendedName>
        <alternativeName>
            <fullName evidence="1">AICAR transformylase</fullName>
        </alternativeName>
    </domain>
    <domain>
        <recommendedName>
            <fullName evidence="1">IMP cyclohydrolase</fullName>
            <ecNumber evidence="1">3.5.4.10</ecNumber>
        </recommendedName>
        <alternativeName>
            <fullName evidence="1">ATIC</fullName>
        </alternativeName>
        <alternativeName>
            <fullName evidence="1">IMP synthase</fullName>
        </alternativeName>
        <alternativeName>
            <fullName evidence="1">Inosinicase</fullName>
        </alternativeName>
    </domain>
</protein>
<dbReference type="EC" id="2.1.2.3" evidence="1"/>
<dbReference type="EC" id="3.5.4.10" evidence="1"/>
<dbReference type="EMBL" id="BA000022">
    <property type="protein sequence ID" value="BAA18861.1"/>
    <property type="status" value="ALT_INIT"/>
    <property type="molecule type" value="Genomic_DNA"/>
</dbReference>
<dbReference type="PIR" id="S76949">
    <property type="entry name" value="S76949"/>
</dbReference>
<dbReference type="SMR" id="P74741"/>
<dbReference type="FunCoup" id="P74741">
    <property type="interactions" value="447"/>
</dbReference>
<dbReference type="IntAct" id="P74741">
    <property type="interactions" value="2"/>
</dbReference>
<dbReference type="STRING" id="1148.gene:10500633"/>
<dbReference type="PaxDb" id="1148-1653951"/>
<dbReference type="EnsemblBacteria" id="BAA18861">
    <property type="protein sequence ID" value="BAA18861"/>
    <property type="gene ID" value="BAA18861"/>
</dbReference>
<dbReference type="KEGG" id="syn:slr0597"/>
<dbReference type="eggNOG" id="COG0138">
    <property type="taxonomic scope" value="Bacteria"/>
</dbReference>
<dbReference type="InParanoid" id="P74741"/>
<dbReference type="PhylomeDB" id="P74741"/>
<dbReference type="UniPathway" id="UPA00074">
    <property type="reaction ID" value="UER00133"/>
</dbReference>
<dbReference type="UniPathway" id="UPA00074">
    <property type="reaction ID" value="UER00135"/>
</dbReference>
<dbReference type="Proteomes" id="UP000001425">
    <property type="component" value="Chromosome"/>
</dbReference>
<dbReference type="GO" id="GO:0005829">
    <property type="term" value="C:cytosol"/>
    <property type="evidence" value="ECO:0000318"/>
    <property type="project" value="GO_Central"/>
</dbReference>
<dbReference type="GO" id="GO:0003937">
    <property type="term" value="F:IMP cyclohydrolase activity"/>
    <property type="evidence" value="ECO:0000318"/>
    <property type="project" value="GO_Central"/>
</dbReference>
<dbReference type="GO" id="GO:0004643">
    <property type="term" value="F:phosphoribosylaminoimidazolecarboxamide formyltransferase activity"/>
    <property type="evidence" value="ECO:0000318"/>
    <property type="project" value="GO_Central"/>
</dbReference>
<dbReference type="GO" id="GO:0006189">
    <property type="term" value="P:'de novo' IMP biosynthetic process"/>
    <property type="evidence" value="ECO:0000318"/>
    <property type="project" value="GO_Central"/>
</dbReference>
<dbReference type="CDD" id="cd01421">
    <property type="entry name" value="IMPCH"/>
    <property type="match status" value="1"/>
</dbReference>
<dbReference type="FunFam" id="3.40.140.20:FF:000001">
    <property type="entry name" value="Bifunctional purine biosynthesis protein PurH"/>
    <property type="match status" value="1"/>
</dbReference>
<dbReference type="FunFam" id="3.40.140.20:FF:000006">
    <property type="entry name" value="Bifunctional purine biosynthesis protein PurH"/>
    <property type="match status" value="1"/>
</dbReference>
<dbReference type="FunFam" id="3.40.50.1380:FF:000001">
    <property type="entry name" value="Bifunctional purine biosynthesis protein PurH"/>
    <property type="match status" value="1"/>
</dbReference>
<dbReference type="Gene3D" id="3.40.140.20">
    <property type="match status" value="2"/>
</dbReference>
<dbReference type="Gene3D" id="3.40.50.1380">
    <property type="entry name" value="Methylglyoxal synthase-like domain"/>
    <property type="match status" value="1"/>
</dbReference>
<dbReference type="HAMAP" id="MF_00139">
    <property type="entry name" value="PurH"/>
    <property type="match status" value="1"/>
</dbReference>
<dbReference type="InterPro" id="IPR024051">
    <property type="entry name" value="AICAR_Tfase_dup_dom_sf"/>
</dbReference>
<dbReference type="InterPro" id="IPR016193">
    <property type="entry name" value="Cytidine_deaminase-like"/>
</dbReference>
<dbReference type="InterPro" id="IPR011607">
    <property type="entry name" value="MGS-like_dom"/>
</dbReference>
<dbReference type="InterPro" id="IPR036914">
    <property type="entry name" value="MGS-like_dom_sf"/>
</dbReference>
<dbReference type="InterPro" id="IPR002695">
    <property type="entry name" value="PurH-like"/>
</dbReference>
<dbReference type="NCBIfam" id="NF002049">
    <property type="entry name" value="PRK00881.1"/>
    <property type="match status" value="1"/>
</dbReference>
<dbReference type="NCBIfam" id="TIGR00355">
    <property type="entry name" value="purH"/>
    <property type="match status" value="1"/>
</dbReference>
<dbReference type="PANTHER" id="PTHR11692:SF0">
    <property type="entry name" value="BIFUNCTIONAL PURINE BIOSYNTHESIS PROTEIN ATIC"/>
    <property type="match status" value="1"/>
</dbReference>
<dbReference type="PANTHER" id="PTHR11692">
    <property type="entry name" value="BIFUNCTIONAL PURINE BIOSYNTHESIS PROTEIN PURH"/>
    <property type="match status" value="1"/>
</dbReference>
<dbReference type="Pfam" id="PF01808">
    <property type="entry name" value="AICARFT_IMPCHas"/>
    <property type="match status" value="1"/>
</dbReference>
<dbReference type="Pfam" id="PF02142">
    <property type="entry name" value="MGS"/>
    <property type="match status" value="1"/>
</dbReference>
<dbReference type="PIRSF" id="PIRSF000414">
    <property type="entry name" value="AICARFT_IMPCHas"/>
    <property type="match status" value="1"/>
</dbReference>
<dbReference type="SMART" id="SM00798">
    <property type="entry name" value="AICARFT_IMPCHas"/>
    <property type="match status" value="1"/>
</dbReference>
<dbReference type="SMART" id="SM00851">
    <property type="entry name" value="MGS"/>
    <property type="match status" value="1"/>
</dbReference>
<dbReference type="SUPFAM" id="SSF53927">
    <property type="entry name" value="Cytidine deaminase-like"/>
    <property type="match status" value="1"/>
</dbReference>
<dbReference type="SUPFAM" id="SSF52335">
    <property type="entry name" value="Methylglyoxal synthase-like"/>
    <property type="match status" value="1"/>
</dbReference>
<dbReference type="PROSITE" id="PS51855">
    <property type="entry name" value="MGS"/>
    <property type="match status" value="1"/>
</dbReference>
<gene>
    <name evidence="1" type="primary">purH</name>
    <name type="ordered locus">slr0597</name>
</gene>
<accession>P74741</accession>
<evidence type="ECO:0000255" key="1">
    <source>
        <dbReference type="HAMAP-Rule" id="MF_00139"/>
    </source>
</evidence>
<evidence type="ECO:0000255" key="2">
    <source>
        <dbReference type="PROSITE-ProRule" id="PRU01202"/>
    </source>
</evidence>
<evidence type="ECO:0000305" key="3"/>
<proteinExistence type="inferred from homology"/>
<name>PUR9_SYNY3</name>
<organism>
    <name type="scientific">Synechocystis sp. (strain ATCC 27184 / PCC 6803 / Kazusa)</name>
    <dbReference type="NCBI Taxonomy" id="1111708"/>
    <lineage>
        <taxon>Bacteria</taxon>
        <taxon>Bacillati</taxon>
        <taxon>Cyanobacteriota</taxon>
        <taxon>Cyanophyceae</taxon>
        <taxon>Synechococcales</taxon>
        <taxon>Merismopediaceae</taxon>
        <taxon>Synechocystis</taxon>
    </lineage>
</organism>
<reference key="1">
    <citation type="journal article" date="1996" name="DNA Res.">
        <title>Sequence analysis of the genome of the unicellular cyanobacterium Synechocystis sp. strain PCC6803. II. Sequence determination of the entire genome and assignment of potential protein-coding regions.</title>
        <authorList>
            <person name="Kaneko T."/>
            <person name="Sato S."/>
            <person name="Kotani H."/>
            <person name="Tanaka A."/>
            <person name="Asamizu E."/>
            <person name="Nakamura Y."/>
            <person name="Miyajima N."/>
            <person name="Hirosawa M."/>
            <person name="Sugiura M."/>
            <person name="Sasamoto S."/>
            <person name="Kimura T."/>
            <person name="Hosouchi T."/>
            <person name="Matsuno A."/>
            <person name="Muraki A."/>
            <person name="Nakazaki N."/>
            <person name="Naruo K."/>
            <person name="Okumura S."/>
            <person name="Shimpo S."/>
            <person name="Takeuchi C."/>
            <person name="Wada T."/>
            <person name="Watanabe A."/>
            <person name="Yamada M."/>
            <person name="Yasuda M."/>
            <person name="Tabata S."/>
        </authorList>
    </citation>
    <scope>NUCLEOTIDE SEQUENCE [LARGE SCALE GENOMIC DNA]</scope>
    <source>
        <strain>ATCC 27184 / PCC 6803 / Kazusa</strain>
    </source>
</reference>
<comment type="catalytic activity">
    <reaction evidence="1">
        <text>(6R)-10-formyltetrahydrofolate + 5-amino-1-(5-phospho-beta-D-ribosyl)imidazole-4-carboxamide = 5-formamido-1-(5-phospho-D-ribosyl)imidazole-4-carboxamide + (6S)-5,6,7,8-tetrahydrofolate</text>
        <dbReference type="Rhea" id="RHEA:22192"/>
        <dbReference type="ChEBI" id="CHEBI:57453"/>
        <dbReference type="ChEBI" id="CHEBI:58467"/>
        <dbReference type="ChEBI" id="CHEBI:58475"/>
        <dbReference type="ChEBI" id="CHEBI:195366"/>
        <dbReference type="EC" id="2.1.2.3"/>
    </reaction>
</comment>
<comment type="catalytic activity">
    <reaction evidence="1">
        <text>IMP + H2O = 5-formamido-1-(5-phospho-D-ribosyl)imidazole-4-carboxamide</text>
        <dbReference type="Rhea" id="RHEA:18445"/>
        <dbReference type="ChEBI" id="CHEBI:15377"/>
        <dbReference type="ChEBI" id="CHEBI:58053"/>
        <dbReference type="ChEBI" id="CHEBI:58467"/>
        <dbReference type="EC" id="3.5.4.10"/>
    </reaction>
</comment>
<comment type="pathway">
    <text evidence="1">Purine metabolism; IMP biosynthesis via de novo pathway; 5-formamido-1-(5-phospho-D-ribosyl)imidazole-4-carboxamide from 5-amino-1-(5-phospho-D-ribosyl)imidazole-4-carboxamide (10-formyl THF route): step 1/1.</text>
</comment>
<comment type="pathway">
    <text evidence="1">Purine metabolism; IMP biosynthesis via de novo pathway; IMP from 5-formamido-1-(5-phospho-D-ribosyl)imidazole-4-carboxamide: step 1/1.</text>
</comment>
<comment type="domain">
    <text evidence="1">The IMP cyclohydrolase activity resides in the N-terminal region.</text>
</comment>
<comment type="similarity">
    <text evidence="1 3">Belongs to the PurH family.</text>
</comment>
<comment type="sequence caution" evidence="3">
    <conflict type="erroneous initiation">
        <sequence resource="EMBL-CDS" id="BAA18861"/>
    </conflict>
</comment>
<keyword id="KW-0378">Hydrolase</keyword>
<keyword id="KW-0511">Multifunctional enzyme</keyword>
<keyword id="KW-0658">Purine biosynthesis</keyword>
<keyword id="KW-1185">Reference proteome</keyword>
<keyword id="KW-0808">Transferase</keyword>
<sequence>MARLALLSVSDKSGIVELAQRLVNEFQFDLISSGGTAKTLKEAGVPVTKVSDYTGAPEILGGRVKTLHPRIHGGILARRDLPSDQADLEANDIRPLDLVVVNLYPFEQTIAKPGVTVAEAVEQIDIGGPAMIRATAKNFAHTTVLTNPNQYEAYLQALQEQGEIPLALRQQFAGEAFALTNAYDQAIANYFSGLSGDSANQFGLSGTLRQPLRYGENPHQSAGWYQTGREATGWAKAEKLQGKELSYNNLVDLEAARRIINEFDVREPAAVILKHTNPCGVALAPTLVEAYQKAFNADATSAFGGIVALNQPLDGPTAAAMVKTFLECIVAPGCDAEAQEILAKKNNLRVLILPDLATGPSQTIKAIAGGFLVQSADDEREDPSTWQVVTEKQPSGEELAELAFAWKVCKHVKSNAITITKNKTTLGVGAGQMNRVGSVEIALKQAGTEAQGACLASDAFFPFDDSVRTAAAAGITTIIQPGGSMRDQDSIQAANELGLVMIFTGVRHFLH</sequence>